<sequence length="530" mass="62041">MAAYQQEEQMQLPRADAIRSRLIDTFSLIEHLQGLSQAVPRHTIRELLDPSRQKKLVLGDQHQLVRFSIKPQRIEQISHAQRLLSRLHVRCSQRPPLSLWAGWVLECPLFKNFIIFLVFLNTIILMVEIELLESTNTKLWPLKLTLEVAAWFILLIFILEILLKWLSNFSVFWKSAWNVFDFVVTMLSLLPEVVVLVGVTGQSVWLQLLRICRVLRSLKLLAQFRQIQIIILVLVRALKSMTFLLMLLLIFFYIFAVTGVYVFSEYTRSPRQDLEYHVFFSDLPNSLVTVFILFTLDHWYALLQDVWKVPEVSRIFSSIYFILWLLLGSIIFRSIIVAMMVTNFQNIRKELNEEMARREVQLKADMFKRQIIQRRKNMSHEALTSSHSKIEDSSRGASQQRESLDLSEVSEVESNYGATEEDLITSASKTEETLSKKREYQSSSCVSSTSSSYSSSSESRFSESIGRLDWETLVHENLPGLMEMDQDDRVWPRDSLFRYFELLEKLQYNLEERKKLQEFAVQALMNLEDK</sequence>
<feature type="chain" id="PRO_0000295676" description="Cation channel sperm-associated protein 2">
    <location>
        <begin position="1"/>
        <end position="530"/>
    </location>
</feature>
<feature type="topological domain" description="Cytoplasmic" evidence="1">
    <location>
        <begin position="1"/>
        <end position="108"/>
    </location>
</feature>
<feature type="transmembrane region" description="Helical; Name=Segment S1" evidence="1">
    <location>
        <begin position="109"/>
        <end position="131"/>
    </location>
</feature>
<feature type="topological domain" description="Extracellular" evidence="1">
    <location>
        <begin position="132"/>
        <end position="140"/>
    </location>
</feature>
<feature type="transmembrane region" description="Helical; Name=Segment S2" evidence="1">
    <location>
        <begin position="141"/>
        <end position="166"/>
    </location>
</feature>
<feature type="topological domain" description="Cytoplasmic" evidence="1">
    <location>
        <begin position="167"/>
        <end position="175"/>
    </location>
</feature>
<feature type="transmembrane region" description="Helical; Name=Segment S3" evidence="1">
    <location>
        <begin position="176"/>
        <end position="200"/>
    </location>
</feature>
<feature type="topological domain" description="Extracellular" evidence="1">
    <location>
        <begin position="201"/>
        <end position="203"/>
    </location>
</feature>
<feature type="transmembrane region" description="Helical; Name=Segment S4" evidence="1">
    <location>
        <begin position="204"/>
        <end position="222"/>
    </location>
</feature>
<feature type="topological domain" description="Cytoplasmic" evidence="1">
    <location>
        <begin position="223"/>
        <end position="239"/>
    </location>
</feature>
<feature type="transmembrane region" description="Helical; Name=Segment S5" evidence="1">
    <location>
        <begin position="240"/>
        <end position="262"/>
    </location>
</feature>
<feature type="topological domain" description="Extracellular" evidence="1">
    <location>
        <begin position="263"/>
        <end position="281"/>
    </location>
</feature>
<feature type="intramembrane region" description="Helical; Pore-forming" evidence="1">
    <location>
        <begin position="282"/>
        <end position="294"/>
    </location>
</feature>
<feature type="topological domain" description="Extracellular" evidence="1">
    <location>
        <begin position="295"/>
        <end position="314"/>
    </location>
</feature>
<feature type="transmembrane region" description="Helical; Name=Segment S6" evidence="1">
    <location>
        <begin position="315"/>
        <end position="341"/>
    </location>
</feature>
<feature type="topological domain" description="Cytoplasmic" evidence="1">
    <location>
        <begin position="342"/>
        <end position="530"/>
    </location>
</feature>
<feature type="region of interest" description="Disordered" evidence="3">
    <location>
        <begin position="378"/>
        <end position="458"/>
    </location>
</feature>
<feature type="compositionally biased region" description="Basic and acidic residues" evidence="3">
    <location>
        <begin position="429"/>
        <end position="440"/>
    </location>
</feature>
<feature type="compositionally biased region" description="Low complexity" evidence="3">
    <location>
        <begin position="442"/>
        <end position="458"/>
    </location>
</feature>
<feature type="splice variant" id="VSP_026973" description="In isoform 4." evidence="13">
    <original>SLLPEVVVLVGV</original>
    <variation>VRIEILRVRLVG</variation>
    <location>
        <begin position="188"/>
        <end position="199"/>
    </location>
</feature>
<feature type="splice variant" id="VSP_026974" description="In isoform 4." evidence="13">
    <location>
        <begin position="200"/>
        <end position="530"/>
    </location>
</feature>
<feature type="splice variant" id="VSP_026975" description="In isoform 3." evidence="12">
    <original>SSRGASQQRESLDLSEVSEVES</original>
    <variation>RSFGLGDSCARKSARANGNGSG</variation>
    <location>
        <begin position="393"/>
        <end position="414"/>
    </location>
</feature>
<feature type="splice variant" id="VSP_026976" description="In isoform 2." evidence="12 13">
    <location>
        <begin position="393"/>
        <end position="394"/>
    </location>
</feature>
<feature type="splice variant" id="VSP_026977" description="In isoform 3." evidence="12">
    <location>
        <begin position="415"/>
        <end position="530"/>
    </location>
</feature>
<feature type="sequence variant" id="VAR_033307" description="In dbSNP:rs2614835.">
    <original>E</original>
    <variation>G</variation>
    <location>
        <position position="8"/>
    </location>
</feature>
<feature type="sequence variant" id="VAR_033308" description="In dbSNP:rs8042868.">
    <original>V</original>
    <variation>I</variation>
    <location>
        <position position="57"/>
    </location>
</feature>
<feature type="sequence conflict" description="In Ref. 2; AAH28728." evidence="14" ref="2">
    <original>E</original>
    <variation>K</variation>
    <location>
        <position position="46"/>
    </location>
</feature>
<organism>
    <name type="scientific">Homo sapiens</name>
    <name type="common">Human</name>
    <dbReference type="NCBI Taxonomy" id="9606"/>
    <lineage>
        <taxon>Eukaryota</taxon>
        <taxon>Metazoa</taxon>
        <taxon>Chordata</taxon>
        <taxon>Craniata</taxon>
        <taxon>Vertebrata</taxon>
        <taxon>Euteleostomi</taxon>
        <taxon>Mammalia</taxon>
        <taxon>Eutheria</taxon>
        <taxon>Euarchontoglires</taxon>
        <taxon>Primates</taxon>
        <taxon>Haplorrhini</taxon>
        <taxon>Catarrhini</taxon>
        <taxon>Hominidae</taxon>
        <taxon>Homo</taxon>
    </lineage>
</organism>
<evidence type="ECO:0000250" key="1">
    <source>
        <dbReference type="UniProtKB" id="A2ARP9"/>
    </source>
</evidence>
<evidence type="ECO:0000250" key="2">
    <source>
        <dbReference type="UniProtKB" id="Q91ZR5"/>
    </source>
</evidence>
<evidence type="ECO:0000256" key="3">
    <source>
        <dbReference type="SAM" id="MobiDB-lite"/>
    </source>
</evidence>
<evidence type="ECO:0000269" key="4">
    <source>
    </source>
</evidence>
<evidence type="ECO:0000269" key="5">
    <source>
    </source>
</evidence>
<evidence type="ECO:0000269" key="6">
    <source>
    </source>
</evidence>
<evidence type="ECO:0000269" key="7">
    <source>
    </source>
</evidence>
<evidence type="ECO:0000269" key="8">
    <source>
    </source>
</evidence>
<evidence type="ECO:0000269" key="9">
    <source>
    </source>
</evidence>
<evidence type="ECO:0000269" key="10">
    <source>
    </source>
</evidence>
<evidence type="ECO:0000269" key="11">
    <source>
    </source>
</evidence>
<evidence type="ECO:0000303" key="12">
    <source>
    </source>
</evidence>
<evidence type="ECO:0000303" key="13">
    <source>
    </source>
</evidence>
<evidence type="ECO:0000305" key="14"/>
<evidence type="ECO:0000305" key="15">
    <source>
    </source>
</evidence>
<evidence type="ECO:0000305" key="16">
    <source>
    </source>
</evidence>
<keyword id="KW-0025">Alternative splicing</keyword>
<keyword id="KW-0106">Calcium</keyword>
<keyword id="KW-0107">Calcium channel</keyword>
<keyword id="KW-0109">Calcium transport</keyword>
<keyword id="KW-1003">Cell membrane</keyword>
<keyword id="KW-0966">Cell projection</keyword>
<keyword id="KW-0969">Cilium</keyword>
<keyword id="KW-0217">Developmental protein</keyword>
<keyword id="KW-0221">Differentiation</keyword>
<keyword id="KW-0282">Flagellum</keyword>
<keyword id="KW-0407">Ion channel</keyword>
<keyword id="KW-0406">Ion transport</keyword>
<keyword id="KW-0472">Membrane</keyword>
<keyword id="KW-1267">Proteomics identification</keyword>
<keyword id="KW-1185">Reference proteome</keyword>
<keyword id="KW-0744">Spermatogenesis</keyword>
<keyword id="KW-0812">Transmembrane</keyword>
<keyword id="KW-1133">Transmembrane helix</keyword>
<keyword id="KW-0813">Transport</keyword>
<keyword id="KW-0851">Voltage-gated channel</keyword>
<dbReference type="EMBL" id="AF411817">
    <property type="protein sequence ID" value="AAL26490.1"/>
    <property type="molecule type" value="mRNA"/>
</dbReference>
<dbReference type="EMBL" id="AF411818">
    <property type="protein sequence ID" value="AAL26491.1"/>
    <property type="molecule type" value="mRNA"/>
</dbReference>
<dbReference type="EMBL" id="AF411819">
    <property type="protein sequence ID" value="AAL26492.1"/>
    <property type="molecule type" value="mRNA"/>
</dbReference>
<dbReference type="EMBL" id="BC028728">
    <property type="protein sequence ID" value="AAH28728.1"/>
    <property type="molecule type" value="mRNA"/>
</dbReference>
<dbReference type="EMBL" id="BC064387">
    <property type="protein sequence ID" value="AAH64387.1"/>
    <property type="molecule type" value="mRNA"/>
</dbReference>
<dbReference type="CCDS" id="CCDS10099.1">
    <molecule id="Q96P56-1"/>
</dbReference>
<dbReference type="CCDS" id="CCDS32216.1">
    <molecule id="Q96P56-2"/>
</dbReference>
<dbReference type="RefSeq" id="NP_001269238.1">
    <molecule id="Q96P56-2"/>
    <property type="nucleotide sequence ID" value="NM_001282309.3"/>
</dbReference>
<dbReference type="RefSeq" id="NP_473361.1">
    <property type="nucleotide sequence ID" value="NM_054020.3"/>
</dbReference>
<dbReference type="RefSeq" id="NP_742093.1">
    <molecule id="Q96P56-1"/>
    <property type="nucleotide sequence ID" value="NM_172095.4"/>
</dbReference>
<dbReference type="RefSeq" id="XP_016877393.1">
    <property type="nucleotide sequence ID" value="XM_017021904.1"/>
</dbReference>
<dbReference type="SMR" id="Q96P56"/>
<dbReference type="BioGRID" id="125561">
    <property type="interactions" value="4"/>
</dbReference>
<dbReference type="ComplexPortal" id="CPX-9165">
    <property type="entry name" value="CatSpermasome complex"/>
</dbReference>
<dbReference type="CORUM" id="Q96P56"/>
<dbReference type="FunCoup" id="Q96P56">
    <property type="interactions" value="14"/>
</dbReference>
<dbReference type="IntAct" id="Q96P56">
    <property type="interactions" value="3"/>
</dbReference>
<dbReference type="STRING" id="9606.ENSP00000371180"/>
<dbReference type="DrugCentral" id="Q96P56"/>
<dbReference type="GuidetoPHARMACOLOGY" id="389"/>
<dbReference type="TCDB" id="1.A.1.19.2">
    <property type="family name" value="the voltage-gated ion channel (vic) superfamily"/>
</dbReference>
<dbReference type="iPTMnet" id="Q96P56"/>
<dbReference type="PhosphoSitePlus" id="Q96P56"/>
<dbReference type="BioMuta" id="CATSPER2"/>
<dbReference type="DMDM" id="156631018"/>
<dbReference type="jPOST" id="Q96P56"/>
<dbReference type="MassIVE" id="Q96P56"/>
<dbReference type="PaxDb" id="9606-ENSP00000371180"/>
<dbReference type="PeptideAtlas" id="Q96P56"/>
<dbReference type="ProteomicsDB" id="77633">
    <molecule id="Q96P56-1"/>
</dbReference>
<dbReference type="ProteomicsDB" id="77634">
    <molecule id="Q96P56-2"/>
</dbReference>
<dbReference type="ProteomicsDB" id="77635">
    <molecule id="Q96P56-3"/>
</dbReference>
<dbReference type="ProteomicsDB" id="77636">
    <molecule id="Q96P56-4"/>
</dbReference>
<dbReference type="Antibodypedia" id="11368">
    <property type="antibodies" value="136 antibodies from 16 providers"/>
</dbReference>
<dbReference type="DNASU" id="117155"/>
<dbReference type="Ensembl" id="ENST00000321596.6">
    <molecule id="Q96P56-2"/>
    <property type="protein sequence ID" value="ENSP00000321463.5"/>
    <property type="gene ID" value="ENSG00000166762.19"/>
</dbReference>
<dbReference type="Ensembl" id="ENST00000396879.8">
    <molecule id="Q96P56-1"/>
    <property type="protein sequence ID" value="ENSP00000380088.3"/>
    <property type="gene ID" value="ENSG00000166762.19"/>
</dbReference>
<dbReference type="Ensembl" id="ENST00000433380.5">
    <molecule id="Q96P56-3"/>
    <property type="protein sequence ID" value="ENSP00000389746.1"/>
    <property type="gene ID" value="ENSG00000166762.19"/>
</dbReference>
<dbReference type="GeneID" id="117155"/>
<dbReference type="KEGG" id="hsa:117155"/>
<dbReference type="MANE-Select" id="ENST00000396879.8">
    <property type="protein sequence ID" value="ENSP00000380088.3"/>
    <property type="RefSeq nucleotide sequence ID" value="NM_172095.4"/>
    <property type="RefSeq protein sequence ID" value="NP_742093.1"/>
</dbReference>
<dbReference type="UCSC" id="uc001zsh.5">
    <molecule id="Q96P56-1"/>
    <property type="organism name" value="human"/>
</dbReference>
<dbReference type="AGR" id="HGNC:18810"/>
<dbReference type="CTD" id="117155"/>
<dbReference type="DisGeNET" id="117155"/>
<dbReference type="GeneCards" id="CATSPER2"/>
<dbReference type="GeneReviews" id="CATSPER2"/>
<dbReference type="HGNC" id="HGNC:18810">
    <property type="gene designation" value="CATSPER2"/>
</dbReference>
<dbReference type="HPA" id="ENSG00000166762">
    <property type="expression patterns" value="Tissue enhanced (retina, testis)"/>
</dbReference>
<dbReference type="MalaCards" id="CATSPER2"/>
<dbReference type="MIM" id="607249">
    <property type="type" value="gene"/>
</dbReference>
<dbReference type="MIM" id="611102">
    <property type="type" value="phenotype"/>
</dbReference>
<dbReference type="neXtProt" id="NX_Q96P56"/>
<dbReference type="OpenTargets" id="ENSG00000166762"/>
<dbReference type="Orphanet" id="94064">
    <property type="disease" value="Deafness-infertility syndrome"/>
</dbReference>
<dbReference type="PharmGKB" id="PA38691"/>
<dbReference type="VEuPathDB" id="HostDB:ENSG00000166762"/>
<dbReference type="eggNOG" id="KOG2301">
    <property type="taxonomic scope" value="Eukaryota"/>
</dbReference>
<dbReference type="GeneTree" id="ENSGT00910000144338"/>
<dbReference type="HOGENOM" id="CLU_038828_0_0_1"/>
<dbReference type="InParanoid" id="Q96P56"/>
<dbReference type="OMA" id="QVVWPRD"/>
<dbReference type="OrthoDB" id="416585at2759"/>
<dbReference type="PAN-GO" id="Q96P56">
    <property type="GO annotations" value="4 GO annotations based on evolutionary models"/>
</dbReference>
<dbReference type="PhylomeDB" id="Q96P56"/>
<dbReference type="TreeFam" id="TF343585"/>
<dbReference type="PathwayCommons" id="Q96P56"/>
<dbReference type="Reactome" id="R-HSA-1300642">
    <property type="pathway name" value="Sperm Motility And Taxes"/>
</dbReference>
<dbReference type="SignaLink" id="Q96P56"/>
<dbReference type="BioGRID-ORCS" id="117155">
    <property type="hits" value="7 hits in 1145 CRISPR screens"/>
</dbReference>
<dbReference type="GeneWiki" id="CatSper2"/>
<dbReference type="GenomeRNAi" id="117155"/>
<dbReference type="Pharos" id="Q96P56">
    <property type="development level" value="Tchem"/>
</dbReference>
<dbReference type="PRO" id="PR:Q96P56"/>
<dbReference type="Proteomes" id="UP000005640">
    <property type="component" value="Chromosome 15"/>
</dbReference>
<dbReference type="RNAct" id="Q96P56">
    <property type="molecule type" value="protein"/>
</dbReference>
<dbReference type="Bgee" id="ENSG00000166762">
    <property type="expression patterns" value="Expressed in cerebellar vermis and 151 other cell types or tissues"/>
</dbReference>
<dbReference type="ExpressionAtlas" id="Q96P56">
    <property type="expression patterns" value="baseline and differential"/>
</dbReference>
<dbReference type="GO" id="GO:0036128">
    <property type="term" value="C:CatSper complex"/>
    <property type="evidence" value="ECO:0000250"/>
    <property type="project" value="UniProtKB"/>
</dbReference>
<dbReference type="GO" id="GO:0031514">
    <property type="term" value="C:motile cilium"/>
    <property type="evidence" value="ECO:0007669"/>
    <property type="project" value="UniProtKB-KW"/>
</dbReference>
<dbReference type="GO" id="GO:0005886">
    <property type="term" value="C:plasma membrane"/>
    <property type="evidence" value="ECO:0000304"/>
    <property type="project" value="Reactome"/>
</dbReference>
<dbReference type="GO" id="GO:0005227">
    <property type="term" value="F:calcium-activated cation channel activity"/>
    <property type="evidence" value="ECO:0007669"/>
    <property type="project" value="InterPro"/>
</dbReference>
<dbReference type="GO" id="GO:0005245">
    <property type="term" value="F:voltage-gated calcium channel activity"/>
    <property type="evidence" value="ECO:0000314"/>
    <property type="project" value="UniProtKB"/>
</dbReference>
<dbReference type="GO" id="GO:0006816">
    <property type="term" value="P:calcium ion transport"/>
    <property type="evidence" value="ECO:0000314"/>
    <property type="project" value="UniProtKB"/>
</dbReference>
<dbReference type="GO" id="GO:0009566">
    <property type="term" value="P:fertilization"/>
    <property type="evidence" value="ECO:0000318"/>
    <property type="project" value="GO_Central"/>
</dbReference>
<dbReference type="GO" id="GO:0030317">
    <property type="term" value="P:flagellated sperm motility"/>
    <property type="evidence" value="ECO:0000318"/>
    <property type="project" value="GO_Central"/>
</dbReference>
<dbReference type="GO" id="GO:0048240">
    <property type="term" value="P:sperm capacitation"/>
    <property type="evidence" value="ECO:0000318"/>
    <property type="project" value="GO_Central"/>
</dbReference>
<dbReference type="FunFam" id="1.20.120.350:FF:000084">
    <property type="entry name" value="Cation channel sperm associated 2"/>
    <property type="match status" value="1"/>
</dbReference>
<dbReference type="FunFam" id="1.10.287.70:FF:000115">
    <property type="entry name" value="Cation channel sperm-associated protein 2"/>
    <property type="match status" value="1"/>
</dbReference>
<dbReference type="Gene3D" id="1.10.287.70">
    <property type="match status" value="1"/>
</dbReference>
<dbReference type="Gene3D" id="1.20.120.350">
    <property type="entry name" value="Voltage-gated potassium channels. Chain C"/>
    <property type="match status" value="1"/>
</dbReference>
<dbReference type="InterPro" id="IPR028747">
    <property type="entry name" value="CatSper2"/>
</dbReference>
<dbReference type="InterPro" id="IPR005821">
    <property type="entry name" value="Ion_trans_dom"/>
</dbReference>
<dbReference type="InterPro" id="IPR027359">
    <property type="entry name" value="Volt_channel_dom_sf"/>
</dbReference>
<dbReference type="PANTHER" id="PTHR46923">
    <property type="entry name" value="CATION CHANNEL SPERM-ASSOCIATED PROTEIN 2"/>
    <property type="match status" value="1"/>
</dbReference>
<dbReference type="PANTHER" id="PTHR46923:SF1">
    <property type="entry name" value="CATION CHANNEL SPERM-ASSOCIATED PROTEIN 2"/>
    <property type="match status" value="1"/>
</dbReference>
<dbReference type="Pfam" id="PF00520">
    <property type="entry name" value="Ion_trans"/>
    <property type="match status" value="1"/>
</dbReference>
<dbReference type="SUPFAM" id="SSF81324">
    <property type="entry name" value="Voltage-gated potassium channels"/>
    <property type="match status" value="1"/>
</dbReference>
<gene>
    <name type="primary">CATSPER2</name>
</gene>
<reference key="1">
    <citation type="journal article" date="2001" name="Proc. Natl. Acad. Sci. U.S.A.">
        <title>A voltage-gated ion channel expressed specifically in spermatozoa.</title>
        <authorList>
            <person name="Quill T.A."/>
            <person name="Ren D."/>
            <person name="Clapham D.E."/>
            <person name="Garbers D.L."/>
        </authorList>
    </citation>
    <scope>NUCLEOTIDE SEQUENCE [MRNA] (ISOFORMS 1; 2 AND 3)</scope>
    <scope>TISSUE SPECIFICITY</scope>
</reference>
<reference key="2">
    <citation type="journal article" date="2004" name="Genome Res.">
        <title>The status, quality, and expansion of the NIH full-length cDNA project: the Mammalian Gene Collection (MGC).</title>
        <authorList>
            <consortium name="The MGC Project Team"/>
        </authorList>
    </citation>
    <scope>NUCLEOTIDE SEQUENCE [LARGE SCALE MRNA] (ISOFORMS 2 AND 4)</scope>
    <source>
        <tissue>Brain</tissue>
        <tissue>Testis</tissue>
    </source>
</reference>
<reference key="3">
    <citation type="journal article" date="2003" name="Eur. J. Hum. Genet.">
        <title>CATSPER2, a human autosomal nonsyndromic male infertility gene.</title>
        <authorList>
            <person name="Avidan N."/>
            <person name="Tamary H."/>
            <person name="Dgany O."/>
            <person name="Cattan D."/>
            <person name="Pariente A."/>
            <person name="Thulliez M."/>
            <person name="Borot N."/>
            <person name="Moati L."/>
            <person name="Barthelme A."/>
            <person name="Shalmon L."/>
            <person name="Krasnov T."/>
            <person name="Ben-Asher E."/>
            <person name="Olender T."/>
            <person name="Khen M."/>
            <person name="Yaniv I."/>
            <person name="Zaizov R."/>
            <person name="Shalev H."/>
            <person name="Delaunay J."/>
            <person name="Fellous M."/>
            <person name="Lancet D."/>
            <person name="Beckmann J.S."/>
        </authorList>
    </citation>
    <scope>INVOLVEMENT IN DIS</scope>
</reference>
<reference key="4">
    <citation type="journal article" date="2006" name="J. Biol. Chem.">
        <title>Association of Catsper1 or -2 with Ca(v)3.3 leads to suppression of T-type calcium channel activity.</title>
        <authorList>
            <person name="Zhang D."/>
            <person name="Chen J."/>
            <person name="Saraf A."/>
            <person name="Cassar S."/>
            <person name="Han P."/>
            <person name="Rogers J.C."/>
            <person name="Brioni J.D."/>
            <person name="Sullivan J.P."/>
            <person name="Gopalakrishnan M."/>
        </authorList>
    </citation>
    <scope>INTERACTION WITH CACNA1I</scope>
</reference>
<reference key="5">
    <citation type="journal article" date="2007" name="J. Med. Genet.">
        <title>Sensorineural deafness and male infertility: a contiguous gene deletion syndrome.</title>
        <authorList>
            <person name="Zhang Y."/>
            <person name="Malekpour M."/>
            <person name="Al-Madani N."/>
            <person name="Kahrizi K."/>
            <person name="Zanganeh M."/>
            <person name="Mohseni M."/>
            <person name="Mojahedi F."/>
            <person name="Daneshi A."/>
            <person name="Najmabadi H."/>
            <person name="Smith R.J.H."/>
        </authorList>
    </citation>
    <scope>INVOLVEMENT IN DIS</scope>
</reference>
<reference key="6">
    <citation type="journal article" date="2007" name="Mol. Hum. Reprod.">
        <title>Expression of CatSper family transcripts in the mouse testis during post-natal development and human ejaculated spermatozoa: relationship to sperm motility.</title>
        <authorList>
            <person name="Li H.-G."/>
            <person name="Ding X.-F."/>
            <person name="Liao A.-H."/>
            <person name="Kong X.-B."/>
            <person name="Xiong C.-L."/>
        </authorList>
    </citation>
    <scope>TISSUE SPECIFICITY</scope>
</reference>
<reference key="7">
    <citation type="journal article" date="2011" name="Nature">
        <title>The CatSper channel mediates progesterone-induced Ca2+ influx in human sperm.</title>
        <authorList>
            <person name="Strunker T."/>
            <person name="Goodwin N."/>
            <person name="Brenker C."/>
            <person name="Kashikar N.D."/>
            <person name="Weyand I."/>
            <person name="Seifert R."/>
            <person name="Kaupp U.B."/>
        </authorList>
    </citation>
    <scope>FUNCTION</scope>
    <scope>TRANSPORTER ACTIVITY</scope>
    <scope>ACTIVITY REGULATION</scope>
</reference>
<reference key="8">
    <citation type="journal article" date="2011" name="Nature">
        <title>Progesterone activates the principal Ca2+ channel of human sperm.</title>
        <authorList>
            <person name="Lishko P.V."/>
            <person name="Botchkina I.L."/>
            <person name="Kirichok Y."/>
        </authorList>
    </citation>
    <scope>FUNCTION</scope>
    <scope>TRANSPORTER ACTIVITY</scope>
    <scope>ACTIVITY REGULATION</scope>
</reference>
<reference key="9">
    <citation type="journal article" date="2016" name="Science">
        <title>Unconventional endocannabinoid signaling governs sperm activation via sex hormone progesterone.</title>
        <authorList>
            <person name="Miller M.R."/>
            <person name="Mannowetz N."/>
            <person name="Iavarone A.T."/>
            <person name="Safavi R."/>
            <person name="Gracheva E.O."/>
            <person name="Smith J.F."/>
            <person name="Hill R.Z."/>
            <person name="Bautista D.M."/>
            <person name="Kirichok Y."/>
            <person name="Lishko P.V."/>
        </authorList>
    </citation>
    <scope>ACTIVITY REGULATION</scope>
</reference>
<name>CTSR2_HUMAN</name>
<protein>
    <recommendedName>
        <fullName>Cation channel sperm-associated protein 2</fullName>
        <shortName>CatSper2</shortName>
    </recommendedName>
</protein>
<comment type="function">
    <text evidence="9 10">Pore-forming subunit of the CatSper complex, a sperm-specific voltage-gated calcium channel, that plays a central role in calcium-dependent physiological responses essential for successful fertilization, such as sperm hyperactivation, acrosome reaction and chemotaxis towards the oocyte.</text>
</comment>
<comment type="catalytic activity">
    <reaction evidence="15 16">
        <text>Ca(2+)(in) = Ca(2+)(out)</text>
        <dbReference type="Rhea" id="RHEA:29671"/>
        <dbReference type="ChEBI" id="CHEBI:29108"/>
    </reaction>
</comment>
<comment type="activity regulation">
    <text evidence="9 10 11">The CatSper calcium channel is indirectly activated by extracellular progesterone and prostaglandins following the sequence: progesterone &gt; PGF1-alpha = PGE1 &gt; PGA1 &gt; PGE2 &gt;&gt; PGD2 (PubMed:21412338, PubMed:21412339, PubMed:26989199). The CatSper calcium channel is directly inhibited by endocannabinoid 2-arachidonoylglycerol (2AG) (PubMed:26989199). Indirect activation by progesterone takes place via the following mechanism: progesterone binds and activates the acylglycerol lipase ABHD2, which in turn mediates hydrolysis of 2AG inhibitor, relieving inhibition of the CatSper channel (PubMed:26989199). The primary effect of progesterone activation is to shift voltage dependence towards more physiological, negative membrane potentials; it is not mediated by metabotropic receptors and second messengers (PubMed:21412338, PubMed:21412339). Sperm capacitation enhances the effect of progesterone by providing additional negative shift. Also activated by the elevation of intracellular pH (PubMed:21412338, PubMed:21412339).</text>
</comment>
<comment type="subunit">
    <text evidence="1 2 6">Component of the CatSper complex or CatSpermasome composed of the core pore-forming members CATSPER1, CATSPER2, CATSPER3 and CATSPER4 as well as auxiliary members CATSPERB, CATSPERG, CATSPERD, CATSPERE, CATSPERZ, C2CD6/CATSPERT, TMEM249, TMEM262 and EFCAB9 (By similarity). HSPA1 may be an additional auxiliary complex member (By similarity). The core complex members CATSPER1, CATSPER2, CATSPER3 and CATSPER4 form a heterotetrameric channel (By similarity). The auxiliary CATSPERB, CATSPERG, CATSPERD and CATSPERE subunits form a pavilion-like structure over the pore which stabilizes the complex through interactions with CATSPER4, CATSPER3, CATSPER1 and CATSPER2 respectively (By similarity). TMEM262/CATSPERH interacts with CATSPERB, further stabilizing the complex. C2CD6/CATSPERT interacts at least with CATSPERD and is required for targeting the CatSper complex in the flagellar membrane (By similarity). Interacts with Ca(v)3.3/CACNA1I, leading to suppression of T-type calcium channel activity (PubMed:16740636).</text>
</comment>
<comment type="interaction">
    <interactant intactId="EBI-2215024">
        <id>Q96P56</id>
    </interactant>
    <interactant intactId="EBI-1220829">
        <id>Q9P0X4</id>
        <label>CACNA1I</label>
    </interactant>
    <organismsDiffer>false</organismsDiffer>
    <experiments>3</experiments>
</comment>
<comment type="subcellular location">
    <subcellularLocation>
        <location evidence="1">Cell projection</location>
        <location evidence="1">Cilium</location>
        <location evidence="1">Flagellum membrane</location>
        <topology evidence="1">Multi-pass membrane protein</topology>
    </subcellularLocation>
</comment>
<comment type="alternative products">
    <event type="alternative splicing"/>
    <isoform>
        <id>Q96P56-1</id>
        <name>1</name>
        <name>Variant 2</name>
        <sequence type="displayed"/>
    </isoform>
    <isoform>
        <id>Q96P56-2</id>
        <name>2</name>
        <name>Variant 1</name>
        <sequence type="described" ref="VSP_026976"/>
    </isoform>
    <isoform>
        <id>Q96P56-3</id>
        <name>3</name>
        <name>Variant 3</name>
        <sequence type="described" ref="VSP_026975 VSP_026977"/>
    </isoform>
    <isoform>
        <id>Q96P56-4</id>
        <name>4</name>
        <sequence type="described" ref="VSP_026973 VSP_026974"/>
    </isoform>
</comment>
<comment type="tissue specificity">
    <text evidence="4 8">Testis-specific.</text>
</comment>
<comment type="disease" evidence="5 7">
    <disease id="DI-01474">
        <name>Deafness-infertility syndrome</name>
        <acronym>DIS</acronym>
        <description>Characterized by deafness and infertility and is caused by large contiguous gene deletions at 15q15.3 that removes both STRC and CATSPER2 genes.</description>
        <dbReference type="MIM" id="611102"/>
    </disease>
    <text>The disease is caused by variants affecting the gene represented in this entry.</text>
</comment>
<comment type="similarity">
    <text evidence="14">Belongs to the cation channel sperm-associated (TC 1.A.1.19) family.</text>
</comment>
<comment type="caution">
    <text evidence="14">In mouse, Slco6c1 is an additional auxiliary subunit of the CatSper complex. It is unclear if the related SLCO6A1 protein performs the same role in non-rodent species.</text>
</comment>
<proteinExistence type="evidence at protein level"/>
<accession>Q96P56</accession>
<accession>Q8NHT9</accession>
<accession>Q96P54</accession>
<accession>Q96P55</accession>